<feature type="chain" id="PRO_0000119154" description="Kelch repeat protein B10">
    <location>
        <begin position="1"/>
        <end position="166"/>
    </location>
</feature>
<feature type="repeat" description="Kelch 1">
    <location>
        <begin position="25"/>
        <end position="76"/>
    </location>
</feature>
<feature type="repeat" description="Kelch 2">
    <location>
        <begin position="77"/>
        <end position="129"/>
    </location>
</feature>
<protein>
    <recommendedName>
        <fullName>Kelch repeat protein B10</fullName>
    </recommendedName>
</protein>
<evidence type="ECO:0000305" key="1"/>
<proteinExistence type="inferred from homology"/>
<organism>
    <name type="scientific">Vaccinia virus (strain Tian Tan)</name>
    <name type="common">VACV</name>
    <dbReference type="NCBI Taxonomy" id="10253"/>
    <lineage>
        <taxon>Viruses</taxon>
        <taxon>Varidnaviria</taxon>
        <taxon>Bamfordvirae</taxon>
        <taxon>Nucleocytoviricota</taxon>
        <taxon>Pokkesviricetes</taxon>
        <taxon>Chitovirales</taxon>
        <taxon>Poxviridae</taxon>
        <taxon>Chordopoxvirinae</taxon>
        <taxon>Orthopoxvirus</taxon>
        <taxon>Vaccinia virus</taxon>
    </lineage>
</organism>
<dbReference type="EMBL" id="AF095689">
    <property type="protein sequence ID" value="AAF34079.1"/>
    <property type="molecule type" value="Genomic_DNA"/>
</dbReference>
<dbReference type="SMR" id="Q77TF6"/>
<dbReference type="Proteomes" id="UP000163220">
    <property type="component" value="Genome"/>
</dbReference>
<dbReference type="Gene3D" id="2.120.10.80">
    <property type="entry name" value="Kelch-type beta propeller"/>
    <property type="match status" value="1"/>
</dbReference>
<dbReference type="InterPro" id="IPR015915">
    <property type="entry name" value="Kelch-typ_b-propeller"/>
</dbReference>
<dbReference type="PANTHER" id="PTHR24412:SF163">
    <property type="entry name" value="CALICIN"/>
    <property type="match status" value="1"/>
</dbReference>
<dbReference type="PANTHER" id="PTHR24412">
    <property type="entry name" value="KELCH PROTEIN"/>
    <property type="match status" value="1"/>
</dbReference>
<dbReference type="SUPFAM" id="SSF117281">
    <property type="entry name" value="Kelch motif"/>
    <property type="match status" value="1"/>
</dbReference>
<comment type="similarity">
    <text evidence="1">Belongs to the poxviruses Kelch family.</text>
</comment>
<keyword id="KW-0880">Kelch repeat</keyword>
<keyword id="KW-0677">Repeat</keyword>
<sequence>MDSGIYETPINYKKSNVSAVSVNNTIFVTGGLFINNSNSTIVVNNMEKLDIYKDKQWSIIEMPMARVYHGIDSTFGMLYFAGGLSVTEQYGNLEKNNEISCYNPRTNKWFDISYTIYKISISSLCKLNNVFYVFSKDIGYVEKYDGAWKLVHDRLPAIKALSTSPY</sequence>
<gene>
    <name type="ORF">TB10R</name>
</gene>
<name>VB10_VACCT</name>
<organismHost>
    <name type="scientific">Homo sapiens</name>
    <name type="common">Human</name>
    <dbReference type="NCBI Taxonomy" id="9606"/>
</organismHost>
<accession>Q77TF6</accession>
<reference key="1">
    <citation type="submission" date="1998-09" db="EMBL/GenBank/DDBJ databases">
        <title>Complete genomic sequence of vaccinia virus (Tian Tan strain).</title>
        <authorList>
            <person name="Jin Q."/>
            <person name="Hou Y.D."/>
            <person name="Cheng N.H."/>
            <person name="Yao E.M."/>
            <person name="Cheng S.X."/>
            <person name="Yang X.K."/>
            <person name="Jing D.Y."/>
            <person name="Yu W.H."/>
            <person name="Yuan J.S."/>
            <person name="Ma X.J."/>
        </authorList>
    </citation>
    <scope>NUCLEOTIDE SEQUENCE [LARGE SCALE GENOMIC DNA]</scope>
</reference>